<proteinExistence type="inferred from homology"/>
<gene>
    <name evidence="1" type="primary">minE</name>
    <name type="ordered locus">ECED1_1316</name>
</gene>
<name>MINE_ECO81</name>
<organism>
    <name type="scientific">Escherichia coli O81 (strain ED1a)</name>
    <dbReference type="NCBI Taxonomy" id="585397"/>
    <lineage>
        <taxon>Bacteria</taxon>
        <taxon>Pseudomonadati</taxon>
        <taxon>Pseudomonadota</taxon>
        <taxon>Gammaproteobacteria</taxon>
        <taxon>Enterobacterales</taxon>
        <taxon>Enterobacteriaceae</taxon>
        <taxon>Escherichia</taxon>
    </lineage>
</organism>
<sequence>MALLDFFLSRKKNTANIAKERLQIIVAERRRSDAEPHYLPQLRKDILEVICKYVQIDPEMVTVQLEQKDGDISILELNVTLPEAEELK</sequence>
<dbReference type="EMBL" id="CU928162">
    <property type="protein sequence ID" value="CAR07516.1"/>
    <property type="molecule type" value="Genomic_DNA"/>
</dbReference>
<dbReference type="RefSeq" id="WP_001185665.1">
    <property type="nucleotide sequence ID" value="NC_011745.1"/>
</dbReference>
<dbReference type="SMR" id="B7MTV2"/>
<dbReference type="GeneID" id="93776260"/>
<dbReference type="KEGG" id="ecq:ECED1_1316"/>
<dbReference type="HOGENOM" id="CLU_137929_2_2_6"/>
<dbReference type="Proteomes" id="UP000000748">
    <property type="component" value="Chromosome"/>
</dbReference>
<dbReference type="GO" id="GO:0051301">
    <property type="term" value="P:cell division"/>
    <property type="evidence" value="ECO:0007669"/>
    <property type="project" value="UniProtKB-KW"/>
</dbReference>
<dbReference type="GO" id="GO:0032955">
    <property type="term" value="P:regulation of division septum assembly"/>
    <property type="evidence" value="ECO:0007669"/>
    <property type="project" value="InterPro"/>
</dbReference>
<dbReference type="FunFam" id="3.30.1070.10:FF:000001">
    <property type="entry name" value="Cell division topological specificity factor"/>
    <property type="match status" value="1"/>
</dbReference>
<dbReference type="Gene3D" id="3.30.1070.10">
    <property type="entry name" value="Cell division topological specificity factor MinE"/>
    <property type="match status" value="1"/>
</dbReference>
<dbReference type="HAMAP" id="MF_00262">
    <property type="entry name" value="MinE"/>
    <property type="match status" value="1"/>
</dbReference>
<dbReference type="InterPro" id="IPR005527">
    <property type="entry name" value="MinE"/>
</dbReference>
<dbReference type="InterPro" id="IPR036707">
    <property type="entry name" value="MinE_sf"/>
</dbReference>
<dbReference type="NCBIfam" id="TIGR01215">
    <property type="entry name" value="minE"/>
    <property type="match status" value="1"/>
</dbReference>
<dbReference type="NCBIfam" id="NF001422">
    <property type="entry name" value="PRK00296.1"/>
    <property type="match status" value="1"/>
</dbReference>
<dbReference type="Pfam" id="PF03776">
    <property type="entry name" value="MinE"/>
    <property type="match status" value="1"/>
</dbReference>
<dbReference type="SUPFAM" id="SSF55229">
    <property type="entry name" value="Cell division protein MinE topological specificity domain"/>
    <property type="match status" value="1"/>
</dbReference>
<evidence type="ECO:0000255" key="1">
    <source>
        <dbReference type="HAMAP-Rule" id="MF_00262"/>
    </source>
</evidence>
<feature type="chain" id="PRO_1000191284" description="Cell division topological specificity factor">
    <location>
        <begin position="1"/>
        <end position="88"/>
    </location>
</feature>
<reference key="1">
    <citation type="journal article" date="2009" name="PLoS Genet.">
        <title>Organised genome dynamics in the Escherichia coli species results in highly diverse adaptive paths.</title>
        <authorList>
            <person name="Touchon M."/>
            <person name="Hoede C."/>
            <person name="Tenaillon O."/>
            <person name="Barbe V."/>
            <person name="Baeriswyl S."/>
            <person name="Bidet P."/>
            <person name="Bingen E."/>
            <person name="Bonacorsi S."/>
            <person name="Bouchier C."/>
            <person name="Bouvet O."/>
            <person name="Calteau A."/>
            <person name="Chiapello H."/>
            <person name="Clermont O."/>
            <person name="Cruveiller S."/>
            <person name="Danchin A."/>
            <person name="Diard M."/>
            <person name="Dossat C."/>
            <person name="Karoui M.E."/>
            <person name="Frapy E."/>
            <person name="Garry L."/>
            <person name="Ghigo J.M."/>
            <person name="Gilles A.M."/>
            <person name="Johnson J."/>
            <person name="Le Bouguenec C."/>
            <person name="Lescat M."/>
            <person name="Mangenot S."/>
            <person name="Martinez-Jehanne V."/>
            <person name="Matic I."/>
            <person name="Nassif X."/>
            <person name="Oztas S."/>
            <person name="Petit M.A."/>
            <person name="Pichon C."/>
            <person name="Rouy Z."/>
            <person name="Ruf C.S."/>
            <person name="Schneider D."/>
            <person name="Tourret J."/>
            <person name="Vacherie B."/>
            <person name="Vallenet D."/>
            <person name="Medigue C."/>
            <person name="Rocha E.P.C."/>
            <person name="Denamur E."/>
        </authorList>
    </citation>
    <scope>NUCLEOTIDE SEQUENCE [LARGE SCALE GENOMIC DNA]</scope>
    <source>
        <strain>ED1a</strain>
    </source>
</reference>
<protein>
    <recommendedName>
        <fullName evidence="1">Cell division topological specificity factor</fullName>
    </recommendedName>
</protein>
<accession>B7MTV2</accession>
<comment type="function">
    <text evidence="1">Prevents the cell division inhibition by proteins MinC and MinD at internal division sites while permitting inhibition at polar sites. This ensures cell division at the proper site by restricting the formation of a division septum at the midpoint of the long axis of the cell.</text>
</comment>
<comment type="similarity">
    <text evidence="1">Belongs to the MinE family.</text>
</comment>
<keyword id="KW-0131">Cell cycle</keyword>
<keyword id="KW-0132">Cell division</keyword>